<reference key="1">
    <citation type="journal article" date="1990" name="J. Neurosci.">
        <title>Multiple nicotinic acetylcholine receptor genes are expressed in goldfish retina and tectum.</title>
        <authorList>
            <person name="Cauley K."/>
            <person name="Agranoff B.W."/>
            <person name="Goldman D."/>
        </authorList>
    </citation>
    <scope>NUCLEOTIDE SEQUENCE [MRNA]</scope>
    <source>
        <tissue>Retina</tissue>
    </source>
</reference>
<evidence type="ECO:0000250" key="1"/>
<evidence type="ECO:0000255" key="2"/>
<evidence type="ECO:0000305" key="3"/>
<feature type="signal peptide">
    <location>
        <begin position="1"/>
        <end position="28"/>
    </location>
</feature>
<feature type="chain" id="PRO_0000000394" description="Neuronal acetylcholine receptor subunit non-alpha-3">
    <location>
        <begin position="29"/>
        <end position="466"/>
    </location>
</feature>
<feature type="topological domain" description="Extracellular">
    <location>
        <begin position="29"/>
        <end position="235"/>
    </location>
</feature>
<feature type="transmembrane region" description="Helical">
    <location>
        <begin position="236"/>
        <end position="260"/>
    </location>
</feature>
<feature type="transmembrane region" description="Helical">
    <location>
        <begin position="268"/>
        <end position="285"/>
    </location>
</feature>
<feature type="transmembrane region" description="Helical">
    <location>
        <begin position="302"/>
        <end position="323"/>
    </location>
</feature>
<feature type="topological domain" description="Cytoplasmic">
    <location>
        <begin position="324"/>
        <end position="438"/>
    </location>
</feature>
<feature type="transmembrane region" description="Helical">
    <location>
        <begin position="439"/>
        <end position="456"/>
    </location>
</feature>
<feature type="glycosylation site" description="N-linked (GlcNAc...) asparagine" evidence="2">
    <location>
        <position position="54"/>
    </location>
</feature>
<feature type="glycosylation site" description="N-linked (GlcNAc...) asparagine" evidence="2">
    <location>
        <position position="141"/>
    </location>
</feature>
<feature type="glycosylation site" description="N-linked (GlcNAc...) asparagine" evidence="2">
    <location>
        <position position="169"/>
    </location>
</feature>
<feature type="glycosylation site" description="N-linked (GlcNAc...) asparagine" evidence="2">
    <location>
        <position position="208"/>
    </location>
</feature>
<feature type="disulfide bond" evidence="1">
    <location>
        <begin position="156"/>
        <end position="170"/>
    </location>
</feature>
<name>ACHN3_CARAU</name>
<organism>
    <name type="scientific">Carassius auratus</name>
    <name type="common">Goldfish</name>
    <dbReference type="NCBI Taxonomy" id="7957"/>
    <lineage>
        <taxon>Eukaryota</taxon>
        <taxon>Metazoa</taxon>
        <taxon>Chordata</taxon>
        <taxon>Craniata</taxon>
        <taxon>Vertebrata</taxon>
        <taxon>Euteleostomi</taxon>
        <taxon>Actinopterygii</taxon>
        <taxon>Neopterygii</taxon>
        <taxon>Teleostei</taxon>
        <taxon>Ostariophysi</taxon>
        <taxon>Cypriniformes</taxon>
        <taxon>Cyprinidae</taxon>
        <taxon>Cyprininae</taxon>
        <taxon>Carassius</taxon>
    </lineage>
</organism>
<keyword id="KW-1003">Cell membrane</keyword>
<keyword id="KW-1015">Disulfide bond</keyword>
<keyword id="KW-0325">Glycoprotein</keyword>
<keyword id="KW-0407">Ion channel</keyword>
<keyword id="KW-0406">Ion transport</keyword>
<keyword id="KW-1071">Ligand-gated ion channel</keyword>
<keyword id="KW-0472">Membrane</keyword>
<keyword id="KW-0628">Postsynaptic cell membrane</keyword>
<keyword id="KW-0675">Receptor</keyword>
<keyword id="KW-1185">Reference proteome</keyword>
<keyword id="KW-0732">Signal</keyword>
<keyword id="KW-0770">Synapse</keyword>
<keyword id="KW-0812">Transmembrane</keyword>
<keyword id="KW-1133">Transmembrane helix</keyword>
<keyword id="KW-0813">Transport</keyword>
<dbReference type="EMBL" id="M29529">
    <property type="protein sequence ID" value="AAA49167.1"/>
    <property type="molecule type" value="mRNA"/>
</dbReference>
<dbReference type="PIR" id="S16333">
    <property type="entry name" value="S16333"/>
</dbReference>
<dbReference type="SMR" id="P18257"/>
<dbReference type="Proteomes" id="UP000515129">
    <property type="component" value="Unplaced"/>
</dbReference>
<dbReference type="GO" id="GO:0045211">
    <property type="term" value="C:postsynaptic membrane"/>
    <property type="evidence" value="ECO:0007669"/>
    <property type="project" value="UniProtKB-SubCell"/>
</dbReference>
<dbReference type="GO" id="GO:0022848">
    <property type="term" value="F:acetylcholine-gated monoatomic cation-selective channel activity"/>
    <property type="evidence" value="ECO:0007669"/>
    <property type="project" value="InterPro"/>
</dbReference>
<dbReference type="GO" id="GO:0004888">
    <property type="term" value="F:transmembrane signaling receptor activity"/>
    <property type="evidence" value="ECO:0007669"/>
    <property type="project" value="InterPro"/>
</dbReference>
<dbReference type="CDD" id="cd19064">
    <property type="entry name" value="LGIC_TM_nAChR"/>
    <property type="match status" value="1"/>
</dbReference>
<dbReference type="FunFam" id="2.70.170.10:FF:000005">
    <property type="entry name" value="Neuronal nicotinic acetylcholine receptor alpha4 subunit"/>
    <property type="match status" value="1"/>
</dbReference>
<dbReference type="FunFam" id="1.20.58.390:FF:000001">
    <property type="entry name" value="Neuronal nicotinic acetylcholine receptor subunit 3"/>
    <property type="match status" value="1"/>
</dbReference>
<dbReference type="Gene3D" id="2.70.170.10">
    <property type="entry name" value="Neurotransmitter-gated ion-channel ligand-binding domain"/>
    <property type="match status" value="1"/>
</dbReference>
<dbReference type="Gene3D" id="1.20.58.390">
    <property type="entry name" value="Neurotransmitter-gated ion-channel transmembrane domain"/>
    <property type="match status" value="2"/>
</dbReference>
<dbReference type="InterPro" id="IPR006202">
    <property type="entry name" value="Neur_chan_lig-bd"/>
</dbReference>
<dbReference type="InterPro" id="IPR036734">
    <property type="entry name" value="Neur_chan_lig-bd_sf"/>
</dbReference>
<dbReference type="InterPro" id="IPR006201">
    <property type="entry name" value="Neur_channel"/>
</dbReference>
<dbReference type="InterPro" id="IPR036719">
    <property type="entry name" value="Neuro-gated_channel_TM_sf"/>
</dbReference>
<dbReference type="InterPro" id="IPR038050">
    <property type="entry name" value="Neuro_actylchol_rec"/>
</dbReference>
<dbReference type="InterPro" id="IPR006029">
    <property type="entry name" value="Neurotrans-gated_channel_TM"/>
</dbReference>
<dbReference type="InterPro" id="IPR018000">
    <property type="entry name" value="Neurotransmitter_ion_chnl_CS"/>
</dbReference>
<dbReference type="InterPro" id="IPR002394">
    <property type="entry name" value="Nicotinic_acetylcholine_rcpt"/>
</dbReference>
<dbReference type="NCBIfam" id="TIGR00860">
    <property type="entry name" value="LIC"/>
    <property type="match status" value="1"/>
</dbReference>
<dbReference type="PANTHER" id="PTHR18945">
    <property type="entry name" value="NEUROTRANSMITTER GATED ION CHANNEL"/>
    <property type="match status" value="1"/>
</dbReference>
<dbReference type="Pfam" id="PF02931">
    <property type="entry name" value="Neur_chan_LBD"/>
    <property type="match status" value="1"/>
</dbReference>
<dbReference type="Pfam" id="PF02932">
    <property type="entry name" value="Neur_chan_memb"/>
    <property type="match status" value="1"/>
</dbReference>
<dbReference type="PRINTS" id="PR00254">
    <property type="entry name" value="NICOTINICR"/>
</dbReference>
<dbReference type="PRINTS" id="PR00252">
    <property type="entry name" value="NRIONCHANNEL"/>
</dbReference>
<dbReference type="SUPFAM" id="SSF90112">
    <property type="entry name" value="Neurotransmitter-gated ion-channel transmembrane pore"/>
    <property type="match status" value="1"/>
</dbReference>
<dbReference type="SUPFAM" id="SSF63712">
    <property type="entry name" value="Nicotinic receptor ligand binding domain-like"/>
    <property type="match status" value="1"/>
</dbReference>
<dbReference type="PROSITE" id="PS00236">
    <property type="entry name" value="NEUROTR_ION_CHANNEL"/>
    <property type="match status" value="1"/>
</dbReference>
<protein>
    <recommendedName>
        <fullName>Neuronal acetylcholine receptor subunit non-alpha-3</fullName>
    </recommendedName>
    <alternativeName>
        <fullName>GFN-alpha-3</fullName>
    </alternativeName>
</protein>
<proteinExistence type="evidence at transcript level"/>
<comment type="function">
    <text>After binding acetylcholine, the AChR responds by an extensive change in conformation that affects all subunits and leads to opening of an ion-conducting channel across the plasma membrane.</text>
</comment>
<comment type="subunit">
    <text>Neuronal AChR seems to be composed of two different type of subunits: alpha and non-alpha (beta).</text>
</comment>
<comment type="subcellular location">
    <subcellularLocation>
        <location>Postsynaptic cell membrane</location>
        <topology>Multi-pass membrane protein</topology>
    </subcellularLocation>
    <subcellularLocation>
        <location>Cell membrane</location>
        <topology>Multi-pass membrane protein</topology>
    </subcellularLocation>
</comment>
<comment type="tissue specificity">
    <text>Retina, tectum and brain.</text>
</comment>
<comment type="similarity">
    <text evidence="3">Belongs to the ligand-gated ion channel (TC 1.A.9) family. Acetylcholine receptor (TC 1.A.9.1) subfamily.</text>
</comment>
<sequence>MKLQISGLLLVTAVAYATIEAPEEFVSLAEMEDTLLRNLFRGYQKWVRPILHANDTITVRFGLKISQLVDVDEKNHLMTTNVWLWQEWTDYKLRWNPEDYGGITSIRVPSETIWLPDIVLYENADGRFEGSLMTKAIVRFNGTIMWTPPASYKSSCTMDVTFFPFDRQNCSMKFGSWTYDGTMVDLTLLDAYVDRKDFFDNGEWEILNATGQRGSRRDGIYSYPYVTYSFILKRLPLFYTLFLIIPCLGLSFLTVLVFYLPSDEGEKLLLSTSVLVSLTVFLLVIEEIIPSSSKVIPLIGEYLLFIMIFVTFSIIVTLFVINVHHRSSATYHPMAPWVKSLFLQRLPRLLCMRGHTDRYQYPDIELRSPELKRGMKKGQQKSAGGGRGGLKEDENQAWIALLEKATHSVHYISRHIKKEHFIREVVQDWKFVAQVLDRIFLWVFLTASVLGTILIFTPALHMYLST</sequence>
<accession>P18257</accession>